<sequence length="137" mass="14446">MAANQKIVFALVCLFLACDLVLGQQQAANSSDSDSDVAESRTFGHHFLRRISFALVPGAFVVGVITTLLAALTVVSIKGLGVGVILLVLAIGQMLSRALPVQAAAAYAAAPVPVQAPVPVVYSHSHTQQPVWLEKEW</sequence>
<gene>
    <name evidence="3 7" type="primary">apn</name>
    <name evidence="7" type="ORF">CG15887</name>
</gene>
<feature type="chain" id="PRO_5015100241" description="Protein apnoia" evidence="1">
    <location>
        <begin position="1"/>
        <end position="137"/>
    </location>
</feature>
<feature type="transmembrane region" description="Helical" evidence="1">
    <location>
        <begin position="7"/>
        <end position="27"/>
    </location>
</feature>
<feature type="transmembrane region" description="Helical" evidence="1">
    <location>
        <begin position="55"/>
        <end position="75"/>
    </location>
</feature>
<feature type="transmembrane region" description="Helical" evidence="1">
    <location>
        <begin position="76"/>
        <end position="96"/>
    </location>
</feature>
<evidence type="ECO:0000255" key="1"/>
<evidence type="ECO:0000269" key="2">
    <source>
    </source>
</evidence>
<evidence type="ECO:0000303" key="3">
    <source>
    </source>
</evidence>
<evidence type="ECO:0000305" key="4"/>
<evidence type="ECO:0000312" key="5">
    <source>
        <dbReference type="EMBL" id="AAL68313.1"/>
    </source>
</evidence>
<evidence type="ECO:0000312" key="6">
    <source>
        <dbReference type="EMBL" id="ANY27178.1"/>
    </source>
</evidence>
<evidence type="ECO:0000312" key="7">
    <source>
        <dbReference type="FlyBase" id="FBgn0038132"/>
    </source>
</evidence>
<evidence type="ECO:0000312" key="8">
    <source>
        <dbReference type="Proteomes" id="UP000000803"/>
    </source>
</evidence>
<protein>
    <recommendedName>
        <fullName evidence="3">Protein apnoia</fullName>
    </recommendedName>
</protein>
<reference evidence="8" key="1">
    <citation type="journal article" date="2000" name="Science">
        <title>The genome sequence of Drosophila melanogaster.</title>
        <authorList>
            <person name="Adams M.D."/>
            <person name="Celniker S.E."/>
            <person name="Holt R.A."/>
            <person name="Evans C.A."/>
            <person name="Gocayne J.D."/>
            <person name="Amanatides P.G."/>
            <person name="Scherer S.E."/>
            <person name="Li P.W."/>
            <person name="Hoskins R.A."/>
            <person name="Galle R.F."/>
            <person name="George R.A."/>
            <person name="Lewis S.E."/>
            <person name="Richards S."/>
            <person name="Ashburner M."/>
            <person name="Henderson S.N."/>
            <person name="Sutton G.G."/>
            <person name="Wortman J.R."/>
            <person name="Yandell M.D."/>
            <person name="Zhang Q."/>
            <person name="Chen L.X."/>
            <person name="Brandon R.C."/>
            <person name="Rogers Y.-H.C."/>
            <person name="Blazej R.G."/>
            <person name="Champe M."/>
            <person name="Pfeiffer B.D."/>
            <person name="Wan K.H."/>
            <person name="Doyle C."/>
            <person name="Baxter E.G."/>
            <person name="Helt G."/>
            <person name="Nelson C.R."/>
            <person name="Miklos G.L.G."/>
            <person name="Abril J.F."/>
            <person name="Agbayani A."/>
            <person name="An H.-J."/>
            <person name="Andrews-Pfannkoch C."/>
            <person name="Baldwin D."/>
            <person name="Ballew R.M."/>
            <person name="Basu A."/>
            <person name="Baxendale J."/>
            <person name="Bayraktaroglu L."/>
            <person name="Beasley E.M."/>
            <person name="Beeson K.Y."/>
            <person name="Benos P.V."/>
            <person name="Berman B.P."/>
            <person name="Bhandari D."/>
            <person name="Bolshakov S."/>
            <person name="Borkova D."/>
            <person name="Botchan M.R."/>
            <person name="Bouck J."/>
            <person name="Brokstein P."/>
            <person name="Brottier P."/>
            <person name="Burtis K.C."/>
            <person name="Busam D.A."/>
            <person name="Butler H."/>
            <person name="Cadieu E."/>
            <person name="Center A."/>
            <person name="Chandra I."/>
            <person name="Cherry J.M."/>
            <person name="Cawley S."/>
            <person name="Dahlke C."/>
            <person name="Davenport L.B."/>
            <person name="Davies P."/>
            <person name="de Pablos B."/>
            <person name="Delcher A."/>
            <person name="Deng Z."/>
            <person name="Mays A.D."/>
            <person name="Dew I."/>
            <person name="Dietz S.M."/>
            <person name="Dodson K."/>
            <person name="Doup L.E."/>
            <person name="Downes M."/>
            <person name="Dugan-Rocha S."/>
            <person name="Dunkov B.C."/>
            <person name="Dunn P."/>
            <person name="Durbin K.J."/>
            <person name="Evangelista C.C."/>
            <person name="Ferraz C."/>
            <person name="Ferriera S."/>
            <person name="Fleischmann W."/>
            <person name="Fosler C."/>
            <person name="Gabrielian A.E."/>
            <person name="Garg N.S."/>
            <person name="Gelbart W.M."/>
            <person name="Glasser K."/>
            <person name="Glodek A."/>
            <person name="Gong F."/>
            <person name="Gorrell J.H."/>
            <person name="Gu Z."/>
            <person name="Guan P."/>
            <person name="Harris M."/>
            <person name="Harris N.L."/>
            <person name="Harvey D.A."/>
            <person name="Heiman T.J."/>
            <person name="Hernandez J.R."/>
            <person name="Houck J."/>
            <person name="Hostin D."/>
            <person name="Houston K.A."/>
            <person name="Howland T.J."/>
            <person name="Wei M.-H."/>
            <person name="Ibegwam C."/>
            <person name="Jalali M."/>
            <person name="Kalush F."/>
            <person name="Karpen G.H."/>
            <person name="Ke Z."/>
            <person name="Kennison J.A."/>
            <person name="Ketchum K.A."/>
            <person name="Kimmel B.E."/>
            <person name="Kodira C.D."/>
            <person name="Kraft C.L."/>
            <person name="Kravitz S."/>
            <person name="Kulp D."/>
            <person name="Lai Z."/>
            <person name="Lasko P."/>
            <person name="Lei Y."/>
            <person name="Levitsky A.A."/>
            <person name="Li J.H."/>
            <person name="Li Z."/>
            <person name="Liang Y."/>
            <person name="Lin X."/>
            <person name="Liu X."/>
            <person name="Mattei B."/>
            <person name="McIntosh T.C."/>
            <person name="McLeod M.P."/>
            <person name="McPherson D."/>
            <person name="Merkulov G."/>
            <person name="Milshina N.V."/>
            <person name="Mobarry C."/>
            <person name="Morris J."/>
            <person name="Moshrefi A."/>
            <person name="Mount S.M."/>
            <person name="Moy M."/>
            <person name="Murphy B."/>
            <person name="Murphy L."/>
            <person name="Muzny D.M."/>
            <person name="Nelson D.L."/>
            <person name="Nelson D.R."/>
            <person name="Nelson K.A."/>
            <person name="Nixon K."/>
            <person name="Nusskern D.R."/>
            <person name="Pacleb J.M."/>
            <person name="Palazzolo M."/>
            <person name="Pittman G.S."/>
            <person name="Pan S."/>
            <person name="Pollard J."/>
            <person name="Puri V."/>
            <person name="Reese M.G."/>
            <person name="Reinert K."/>
            <person name="Remington K."/>
            <person name="Saunders R.D.C."/>
            <person name="Scheeler F."/>
            <person name="Shen H."/>
            <person name="Shue B.C."/>
            <person name="Siden-Kiamos I."/>
            <person name="Simpson M."/>
            <person name="Skupski M.P."/>
            <person name="Smith T.J."/>
            <person name="Spier E."/>
            <person name="Spradling A.C."/>
            <person name="Stapleton M."/>
            <person name="Strong R."/>
            <person name="Sun E."/>
            <person name="Svirskas R."/>
            <person name="Tector C."/>
            <person name="Turner R."/>
            <person name="Venter E."/>
            <person name="Wang A.H."/>
            <person name="Wang X."/>
            <person name="Wang Z.-Y."/>
            <person name="Wassarman D.A."/>
            <person name="Weinstock G.M."/>
            <person name="Weissenbach J."/>
            <person name="Williams S.M."/>
            <person name="Woodage T."/>
            <person name="Worley K.C."/>
            <person name="Wu D."/>
            <person name="Yang S."/>
            <person name="Yao Q.A."/>
            <person name="Ye J."/>
            <person name="Yeh R.-F."/>
            <person name="Zaveri J.S."/>
            <person name="Zhan M."/>
            <person name="Zhang G."/>
            <person name="Zhao Q."/>
            <person name="Zheng L."/>
            <person name="Zheng X.H."/>
            <person name="Zhong F.N."/>
            <person name="Zhong W."/>
            <person name="Zhou X."/>
            <person name="Zhu S.C."/>
            <person name="Zhu X."/>
            <person name="Smith H.O."/>
            <person name="Gibbs R.A."/>
            <person name="Myers E.W."/>
            <person name="Rubin G.M."/>
            <person name="Venter J.C."/>
        </authorList>
    </citation>
    <scope>NUCLEOTIDE SEQUENCE [LARGE SCALE GENOMIC DNA]</scope>
    <source>
        <strain evidence="8">Berkeley</strain>
    </source>
</reference>
<reference evidence="8" key="2">
    <citation type="journal article" date="2002" name="Genome Biol.">
        <title>Annotation of the Drosophila melanogaster euchromatic genome: a systematic review.</title>
        <authorList>
            <person name="Misra S."/>
            <person name="Crosby M.A."/>
            <person name="Mungall C.J."/>
            <person name="Matthews B.B."/>
            <person name="Campbell K.S."/>
            <person name="Hradecky P."/>
            <person name="Huang Y."/>
            <person name="Kaminker J.S."/>
            <person name="Millburn G.H."/>
            <person name="Prochnik S.E."/>
            <person name="Smith C.D."/>
            <person name="Tupy J.L."/>
            <person name="Whitfield E.J."/>
            <person name="Bayraktaroglu L."/>
            <person name="Berman B.P."/>
            <person name="Bettencourt B.R."/>
            <person name="Celniker S.E."/>
            <person name="de Grey A.D.N.J."/>
            <person name="Drysdale R.A."/>
            <person name="Harris N.L."/>
            <person name="Richter J."/>
            <person name="Russo S."/>
            <person name="Schroeder A.J."/>
            <person name="Shu S.Q."/>
            <person name="Stapleton M."/>
            <person name="Yamada C."/>
            <person name="Ashburner M."/>
            <person name="Gelbart W.M."/>
            <person name="Rubin G.M."/>
            <person name="Lewis S.E."/>
        </authorList>
    </citation>
    <scope>GENOME REANNOTATION</scope>
    <source>
        <strain evidence="8">Berkeley</strain>
    </source>
</reference>
<reference evidence="5" key="3">
    <citation type="journal article" date="2002" name="Genome Biol.">
        <title>A Drosophila full-length cDNA resource.</title>
        <authorList>
            <person name="Stapleton M."/>
            <person name="Carlson J.W."/>
            <person name="Brokstein P."/>
            <person name="Yu C."/>
            <person name="Champe M."/>
            <person name="George R.A."/>
            <person name="Guarin H."/>
            <person name="Kronmiller B."/>
            <person name="Pacleb J.M."/>
            <person name="Park S."/>
            <person name="Wan K.H."/>
            <person name="Rubin G.M."/>
            <person name="Celniker S.E."/>
        </authorList>
    </citation>
    <scope>NUCLEOTIDE SEQUENCE [LARGE SCALE MRNA]</scope>
    <source>
        <strain evidence="6">Berkeley</strain>
        <tissue evidence="6">Embryo</tissue>
    </source>
</reference>
<reference evidence="6" key="4">
    <citation type="submission" date="2016-07" db="EMBL/GenBank/DDBJ databases">
        <authorList>
            <person name="Florea S."/>
            <person name="Webb J.S."/>
            <person name="Jaromczyk J."/>
            <person name="Schardl C.L."/>
        </authorList>
    </citation>
    <scope>NUCLEOTIDE SEQUENCE [LARGE SCALE MRNA]</scope>
    <source>
        <strain evidence="6">Berkeley</strain>
    </source>
</reference>
<reference evidence="4" key="5">
    <citation type="journal article" date="2019" name="PLoS Genet.">
        <title>The apical protein Apnoia interacts with Crumbs to regulate tracheal growth and inflation.</title>
        <authorList>
            <person name="Skouloudaki K."/>
            <person name="Papadopoulos D.K."/>
            <person name="Tomancak P."/>
            <person name="Knust E."/>
        </authorList>
    </citation>
    <scope>FUNCTION</scope>
    <scope>INTERACTION WITH CRB</scope>
    <scope>DEVELOPMENTAL STAGE</scope>
    <scope>DISRUPTION PHENOTYPE</scope>
    <scope>SUBCELLULAR LOCATION</scope>
</reference>
<keyword id="KW-1003">Cell membrane</keyword>
<keyword id="KW-0472">Membrane</keyword>
<keyword id="KW-1185">Reference proteome</keyword>
<keyword id="KW-0812">Transmembrane</keyword>
<keyword id="KW-1133">Transmembrane helix</keyword>
<proteinExistence type="evidence at protein level"/>
<dbReference type="EMBL" id="AE014297">
    <property type="protein sequence ID" value="AAF54922.1"/>
    <property type="molecule type" value="Genomic_DNA"/>
</dbReference>
<dbReference type="EMBL" id="AY075504">
    <property type="protein sequence ID" value="AAL68313.1"/>
    <property type="molecule type" value="mRNA"/>
</dbReference>
<dbReference type="EMBL" id="KX531368">
    <property type="protein sequence ID" value="ANY27178.1"/>
    <property type="molecule type" value="mRNA"/>
</dbReference>
<dbReference type="RefSeq" id="NP_650270.1">
    <property type="nucleotide sequence ID" value="NM_142013.3"/>
</dbReference>
<dbReference type="FunCoup" id="Q9VFX3">
    <property type="interactions" value="4"/>
</dbReference>
<dbReference type="IntAct" id="Q9VFX3">
    <property type="interactions" value="2"/>
</dbReference>
<dbReference type="STRING" id="7227.FBpp0082244"/>
<dbReference type="TCDB" id="9.B.326.1.1">
    <property type="family name" value="the transmembrane apical trachael tube apnoia (apn) family"/>
</dbReference>
<dbReference type="PaxDb" id="7227-FBpp0082244"/>
<dbReference type="DNASU" id="41631"/>
<dbReference type="EnsemblMetazoa" id="FBtr0082776">
    <property type="protein sequence ID" value="FBpp0082244"/>
    <property type="gene ID" value="FBgn0038132"/>
</dbReference>
<dbReference type="GeneID" id="41631"/>
<dbReference type="KEGG" id="dme:Dmel_CG15887"/>
<dbReference type="UCSC" id="CG15887-RA">
    <property type="organism name" value="d. melanogaster"/>
</dbReference>
<dbReference type="AGR" id="FB:FBgn0038132"/>
<dbReference type="CTD" id="41631"/>
<dbReference type="FlyBase" id="FBgn0038132">
    <property type="gene designation" value="apn"/>
</dbReference>
<dbReference type="VEuPathDB" id="VectorBase:FBgn0038132"/>
<dbReference type="eggNOG" id="ENOG502SXCA">
    <property type="taxonomic scope" value="Eukaryota"/>
</dbReference>
<dbReference type="HOGENOM" id="CLU_1961417_0_0_1"/>
<dbReference type="InParanoid" id="Q9VFX3"/>
<dbReference type="OMA" id="CSVNRIT"/>
<dbReference type="OrthoDB" id="6611212at2759"/>
<dbReference type="PhylomeDB" id="Q9VFX3"/>
<dbReference type="BioGRID-ORCS" id="41631">
    <property type="hits" value="0 hits in 1 CRISPR screen"/>
</dbReference>
<dbReference type="GenomeRNAi" id="41631"/>
<dbReference type="PRO" id="PR:Q9VFX3"/>
<dbReference type="Proteomes" id="UP000000803">
    <property type="component" value="Chromosome 3R"/>
</dbReference>
<dbReference type="Bgee" id="FBgn0038132">
    <property type="expression patterns" value="Expressed in enterocyte of posterior adult midgut epithelium (Drosophila) in digestive tract and 11 other cell types or tissues"/>
</dbReference>
<dbReference type="GO" id="GO:0016324">
    <property type="term" value="C:apical plasma membrane"/>
    <property type="evidence" value="ECO:0000314"/>
    <property type="project" value="UniProtKB"/>
</dbReference>
<dbReference type="GO" id="GO:0035001">
    <property type="term" value="P:dorsal trunk growth, open tracheal system"/>
    <property type="evidence" value="ECO:0000315"/>
    <property type="project" value="UniProtKB"/>
</dbReference>
<dbReference type="GO" id="GO:0035002">
    <property type="term" value="P:liquid clearance, open tracheal system"/>
    <property type="evidence" value="ECO:0000315"/>
    <property type="project" value="UniProtKB"/>
</dbReference>
<dbReference type="GO" id="GO:0035149">
    <property type="term" value="P:lumen formation, open tracheal system"/>
    <property type="evidence" value="ECO:0000315"/>
    <property type="project" value="UniProtKB"/>
</dbReference>
<dbReference type="GO" id="GO:0007424">
    <property type="term" value="P:open tracheal system development"/>
    <property type="evidence" value="ECO:0000315"/>
    <property type="project" value="UniProtKB"/>
</dbReference>
<dbReference type="GO" id="GO:1905477">
    <property type="term" value="P:positive regulation of protein localization to membrane"/>
    <property type="evidence" value="ECO:0000315"/>
    <property type="project" value="UniProtKB"/>
</dbReference>
<dbReference type="GO" id="GO:0060438">
    <property type="term" value="P:trachea development"/>
    <property type="evidence" value="ECO:0000315"/>
    <property type="project" value="UniProtKB"/>
</dbReference>
<name>APN_DROME</name>
<comment type="function">
    <text evidence="2">Transmembrane protein that plays a key role in trachea development by regulating crb localization and maintenance at the apical cell membrane (PubMed:30645584). Required for anisotropic apical surface expansion important for tracheal tube elongation and lumen stability at larval stages (PubMed:30645584).</text>
</comment>
<comment type="subunit">
    <text evidence="2">Interacts with crb.</text>
</comment>
<comment type="interaction">
    <interactant intactId="EBI-26809466">
        <id>Q9VFX3</id>
    </interactant>
    <interactant intactId="EBI-672928">
        <id>P10040</id>
        <label>crb</label>
    </interactant>
    <organismsDiffer>false</organismsDiffer>
    <experiments>4</experiments>
</comment>
<comment type="subcellular location">
    <subcellularLocation>
        <location evidence="2">Apical cell membrane</location>
        <topology evidence="1">Multi-pass membrane protein</topology>
    </subcellularLocation>
    <text evidence="2">In tracheal cells, colocalizes with crb in the subapical region, a small region of the apical membrane apical to the adherens junctions.</text>
</comment>
<comment type="developmental stage">
    <text evidence="2">Expressed in embryos at stage 13 in tracheal fusion cells (at protein level). During embryonic stages 15 and 16, detected in the dorsal and lateral trunks, in the visceral and dorsal branches and in the transverse connective branches (at protein level). In the larvae, continuously expressed in the entire tracheal system (at protein level).</text>
</comment>
<comment type="disruption phenotype">
    <text evidence="2">Dies at second instar larval stage (PubMed:30645584). Shows reduced larval body size and shortened dorsal trunk probably due to defective membrane growth in larval tracheae (PubMed:30645584). Results in defective tracheal tube maturation including liquid clearance and gas filling resulting in twisted and uninflated tracheal tubes (PubMed:30645584). Results in mislocalization of crb from the subapical region to Vsp35/retromer-positive vesicles in the cytoplasm (PubMed:30645584). RNAi-mediated knockdown in the trachea results in a similar phenotype (PubMed:30645584).</text>
</comment>
<comment type="miscellaneous">
    <text evidence="3">Apnoia means lack of air in Greek.</text>
</comment>
<organism>
    <name type="scientific">Drosophila melanogaster</name>
    <name type="common">Fruit fly</name>
    <dbReference type="NCBI Taxonomy" id="7227"/>
    <lineage>
        <taxon>Eukaryota</taxon>
        <taxon>Metazoa</taxon>
        <taxon>Ecdysozoa</taxon>
        <taxon>Arthropoda</taxon>
        <taxon>Hexapoda</taxon>
        <taxon>Insecta</taxon>
        <taxon>Pterygota</taxon>
        <taxon>Neoptera</taxon>
        <taxon>Endopterygota</taxon>
        <taxon>Diptera</taxon>
        <taxon>Brachycera</taxon>
        <taxon>Muscomorpha</taxon>
        <taxon>Ephydroidea</taxon>
        <taxon>Drosophilidae</taxon>
        <taxon>Drosophila</taxon>
        <taxon>Sophophora</taxon>
    </lineage>
</organism>
<accession>Q9VFX3</accession>